<sequence>MIWRSEHIWIELIVGSRKISNFCWAFLLFLGSLGFVLVGTSSYLGKNLISLVSSQQIHFFPQGLVMSFYGIAGLFISSYLWCTISWNVGSGYDRFDRKEGIVCIFRWGFPGKNRRIFLRFRMKDIQSIRIEVKEGIYARRVLYMEIKGQGAIPLTRSDDNLTLREIEQKAAELAYFLRVPIEVF</sequence>
<dbReference type="EMBL" id="AJ271079">
    <property type="protein sequence ID" value="CAB67167.2"/>
    <property type="molecule type" value="Genomic_DNA"/>
</dbReference>
<dbReference type="RefSeq" id="NP_084702.2">
    <property type="nucleotide sequence ID" value="NC_002693.2"/>
</dbReference>
<dbReference type="GeneID" id="802808"/>
<dbReference type="GO" id="GO:0009535">
    <property type="term" value="C:chloroplast thylakoid membrane"/>
    <property type="evidence" value="ECO:0007669"/>
    <property type="project" value="UniProtKB-SubCell"/>
</dbReference>
<dbReference type="GO" id="GO:0009522">
    <property type="term" value="C:photosystem I"/>
    <property type="evidence" value="ECO:0007669"/>
    <property type="project" value="InterPro"/>
</dbReference>
<dbReference type="GO" id="GO:0015979">
    <property type="term" value="P:photosynthesis"/>
    <property type="evidence" value="ECO:0007669"/>
    <property type="project" value="UniProtKB-UniRule"/>
</dbReference>
<dbReference type="HAMAP" id="MF_00437">
    <property type="entry name" value="Ycf4"/>
    <property type="match status" value="1"/>
</dbReference>
<dbReference type="InterPro" id="IPR003359">
    <property type="entry name" value="PSI_Ycf4_assembly"/>
</dbReference>
<dbReference type="NCBIfam" id="NF002712">
    <property type="entry name" value="PRK02542.1"/>
    <property type="match status" value="1"/>
</dbReference>
<dbReference type="PANTHER" id="PTHR33288">
    <property type="match status" value="1"/>
</dbReference>
<dbReference type="PANTHER" id="PTHR33288:SF4">
    <property type="entry name" value="PHOTOSYSTEM I ASSEMBLY PROTEIN YCF4"/>
    <property type="match status" value="1"/>
</dbReference>
<dbReference type="Pfam" id="PF02392">
    <property type="entry name" value="Ycf4"/>
    <property type="match status" value="1"/>
</dbReference>
<accession>Q9MTL1</accession>
<proteinExistence type="inferred from homology"/>
<organism>
    <name type="scientific">Oenothera elata subsp. hookeri</name>
    <name type="common">Hooker's evening primrose</name>
    <name type="synonym">Oenothera hookeri</name>
    <dbReference type="NCBI Taxonomy" id="85636"/>
    <lineage>
        <taxon>Eukaryota</taxon>
        <taxon>Viridiplantae</taxon>
        <taxon>Streptophyta</taxon>
        <taxon>Embryophyta</taxon>
        <taxon>Tracheophyta</taxon>
        <taxon>Spermatophyta</taxon>
        <taxon>Magnoliopsida</taxon>
        <taxon>eudicotyledons</taxon>
        <taxon>Gunneridae</taxon>
        <taxon>Pentapetalae</taxon>
        <taxon>rosids</taxon>
        <taxon>malvids</taxon>
        <taxon>Myrtales</taxon>
        <taxon>Onagraceae</taxon>
        <taxon>Onagroideae</taxon>
        <taxon>Onagreae</taxon>
        <taxon>Oenothera</taxon>
    </lineage>
</organism>
<evidence type="ECO:0000255" key="1">
    <source>
        <dbReference type="HAMAP-Rule" id="MF_00437"/>
    </source>
</evidence>
<protein>
    <recommendedName>
        <fullName evidence="1">Photosystem I assembly protein Ycf4</fullName>
    </recommendedName>
</protein>
<name>YCF4_OENEH</name>
<gene>
    <name evidence="1" type="primary">ycf4</name>
</gene>
<comment type="function">
    <text evidence="1">Seems to be required for the assembly of the photosystem I complex.</text>
</comment>
<comment type="subcellular location">
    <subcellularLocation>
        <location evidence="1">Plastid</location>
        <location evidence="1">Chloroplast thylakoid membrane</location>
        <topology evidence="1">Multi-pass membrane protein</topology>
    </subcellularLocation>
</comment>
<comment type="similarity">
    <text evidence="1">Belongs to the Ycf4 family.</text>
</comment>
<geneLocation type="chloroplast"/>
<reference key="1">
    <citation type="journal article" date="2000" name="Mol. Gen. Genet.">
        <title>Complete nucleotide sequence of the Oenothera elata plastid chromosome, representing plastome I of the five distinguishable Euoenothera plastomes.</title>
        <authorList>
            <person name="Hupfer H."/>
            <person name="Swiatek M."/>
            <person name="Hornung S."/>
            <person name="Herrmann R.G."/>
            <person name="Maier R.M."/>
            <person name="Chiu W.-L."/>
            <person name="Sears B."/>
        </authorList>
    </citation>
    <scope>NUCLEOTIDE SEQUENCE [LARGE SCALE GENOMIC DNA]</scope>
    <source>
        <strain>cv. Johansen</strain>
    </source>
</reference>
<reference key="2">
    <citation type="journal article" date="2008" name="Nucleic Acids Res.">
        <title>The complete nucleotide sequences of the five genetically distinct plastid genomes of Oenothera, subsection Oenothera: I. Sequence evaluation and plastome evolution.</title>
        <authorList>
            <person name="Greiner S."/>
            <person name="Wang X."/>
            <person name="Rauwolf U."/>
            <person name="Silber M.V."/>
            <person name="Mayer K."/>
            <person name="Meurer J."/>
            <person name="Haberer G."/>
            <person name="Herrmann R.G."/>
        </authorList>
    </citation>
    <scope>SEQUENCE REVISION TO 26; 80 AND 180-182</scope>
</reference>
<feature type="chain" id="PRO_0000217617" description="Photosystem I assembly protein Ycf4">
    <location>
        <begin position="1"/>
        <end position="184"/>
    </location>
</feature>
<feature type="transmembrane region" description="Helical" evidence="1">
    <location>
        <begin position="19"/>
        <end position="39"/>
    </location>
</feature>
<feature type="transmembrane region" description="Helical" evidence="1">
    <location>
        <begin position="64"/>
        <end position="84"/>
    </location>
</feature>
<keyword id="KW-0150">Chloroplast</keyword>
<keyword id="KW-0472">Membrane</keyword>
<keyword id="KW-0602">Photosynthesis</keyword>
<keyword id="KW-0934">Plastid</keyword>
<keyword id="KW-0793">Thylakoid</keyword>
<keyword id="KW-0812">Transmembrane</keyword>
<keyword id="KW-1133">Transmembrane helix</keyword>